<organism>
    <name type="scientific">Xylella fastidiosa (strain 9a5c)</name>
    <dbReference type="NCBI Taxonomy" id="160492"/>
    <lineage>
        <taxon>Bacteria</taxon>
        <taxon>Pseudomonadati</taxon>
        <taxon>Pseudomonadota</taxon>
        <taxon>Gammaproteobacteria</taxon>
        <taxon>Lysobacterales</taxon>
        <taxon>Lysobacteraceae</taxon>
        <taxon>Xylella</taxon>
    </lineage>
</organism>
<proteinExistence type="inferred from homology"/>
<gene>
    <name evidence="1" type="primary">nuoK</name>
    <name type="ordered locus">XF_0315</name>
</gene>
<sequence>MISLGHLLVLGAALFCISLAGIFLNRKNVIVLLMSIELMLLAVNVNFIAFSRQLGDTAGQLFVFFILTVAAAEAAIGLAILVTLFRTRHTINVAEVDALKG</sequence>
<dbReference type="EC" id="7.1.1.-" evidence="1"/>
<dbReference type="EMBL" id="AE003849">
    <property type="protein sequence ID" value="AAF83126.1"/>
    <property type="molecule type" value="Genomic_DNA"/>
</dbReference>
<dbReference type="PIR" id="E82822">
    <property type="entry name" value="E82822"/>
</dbReference>
<dbReference type="RefSeq" id="WP_010892850.1">
    <property type="nucleotide sequence ID" value="NC_002488.3"/>
</dbReference>
<dbReference type="SMR" id="Q9PGI5"/>
<dbReference type="STRING" id="160492.XF_0315"/>
<dbReference type="KEGG" id="xfa:XF_0315"/>
<dbReference type="PATRIC" id="fig|160492.11.peg.343"/>
<dbReference type="eggNOG" id="COG0713">
    <property type="taxonomic scope" value="Bacteria"/>
</dbReference>
<dbReference type="HOGENOM" id="CLU_144724_2_0_6"/>
<dbReference type="Proteomes" id="UP000000812">
    <property type="component" value="Chromosome"/>
</dbReference>
<dbReference type="GO" id="GO:0030964">
    <property type="term" value="C:NADH dehydrogenase complex"/>
    <property type="evidence" value="ECO:0007669"/>
    <property type="project" value="TreeGrafter"/>
</dbReference>
<dbReference type="GO" id="GO:0005886">
    <property type="term" value="C:plasma membrane"/>
    <property type="evidence" value="ECO:0007669"/>
    <property type="project" value="UniProtKB-SubCell"/>
</dbReference>
<dbReference type="GO" id="GO:0050136">
    <property type="term" value="F:NADH:ubiquinone reductase (non-electrogenic) activity"/>
    <property type="evidence" value="ECO:0007669"/>
    <property type="project" value="UniProtKB-UniRule"/>
</dbReference>
<dbReference type="GO" id="GO:0048038">
    <property type="term" value="F:quinone binding"/>
    <property type="evidence" value="ECO:0007669"/>
    <property type="project" value="UniProtKB-KW"/>
</dbReference>
<dbReference type="GO" id="GO:0042773">
    <property type="term" value="P:ATP synthesis coupled electron transport"/>
    <property type="evidence" value="ECO:0007669"/>
    <property type="project" value="InterPro"/>
</dbReference>
<dbReference type="FunFam" id="1.10.287.3510:FF:000001">
    <property type="entry name" value="NADH-quinone oxidoreductase subunit K"/>
    <property type="match status" value="1"/>
</dbReference>
<dbReference type="Gene3D" id="1.10.287.3510">
    <property type="match status" value="1"/>
</dbReference>
<dbReference type="HAMAP" id="MF_01456">
    <property type="entry name" value="NDH1_NuoK"/>
    <property type="match status" value="1"/>
</dbReference>
<dbReference type="InterPro" id="IPR001133">
    <property type="entry name" value="NADH_UbQ_OxRdtase_chain4L/K"/>
</dbReference>
<dbReference type="InterPro" id="IPR039428">
    <property type="entry name" value="NUOK/Mnh_C1-like"/>
</dbReference>
<dbReference type="NCBIfam" id="NF004320">
    <property type="entry name" value="PRK05715.1-2"/>
    <property type="match status" value="1"/>
</dbReference>
<dbReference type="NCBIfam" id="NF004321">
    <property type="entry name" value="PRK05715.1-3"/>
    <property type="match status" value="1"/>
</dbReference>
<dbReference type="NCBIfam" id="NF004323">
    <property type="entry name" value="PRK05715.1-5"/>
    <property type="match status" value="1"/>
</dbReference>
<dbReference type="PANTHER" id="PTHR11434:SF21">
    <property type="entry name" value="NADH DEHYDROGENASE SUBUNIT 4L-RELATED"/>
    <property type="match status" value="1"/>
</dbReference>
<dbReference type="PANTHER" id="PTHR11434">
    <property type="entry name" value="NADH-UBIQUINONE OXIDOREDUCTASE SUBUNIT ND4L"/>
    <property type="match status" value="1"/>
</dbReference>
<dbReference type="Pfam" id="PF00420">
    <property type="entry name" value="Oxidored_q2"/>
    <property type="match status" value="1"/>
</dbReference>
<protein>
    <recommendedName>
        <fullName evidence="1">NADH-quinone oxidoreductase subunit K</fullName>
        <ecNumber evidence="1">7.1.1.-</ecNumber>
    </recommendedName>
    <alternativeName>
        <fullName evidence="1">NADH dehydrogenase I subunit K</fullName>
    </alternativeName>
    <alternativeName>
        <fullName evidence="1">NDH-1 subunit K</fullName>
    </alternativeName>
</protein>
<reference key="1">
    <citation type="journal article" date="2000" name="Nature">
        <title>The genome sequence of the plant pathogen Xylella fastidiosa.</title>
        <authorList>
            <person name="Simpson A.J.G."/>
            <person name="Reinach F.C."/>
            <person name="Arruda P."/>
            <person name="Abreu F.A."/>
            <person name="Acencio M."/>
            <person name="Alvarenga R."/>
            <person name="Alves L.M.C."/>
            <person name="Araya J.E."/>
            <person name="Baia G.S."/>
            <person name="Baptista C.S."/>
            <person name="Barros M.H."/>
            <person name="Bonaccorsi E.D."/>
            <person name="Bordin S."/>
            <person name="Bove J.M."/>
            <person name="Briones M.R.S."/>
            <person name="Bueno M.R.P."/>
            <person name="Camargo A.A."/>
            <person name="Camargo L.E.A."/>
            <person name="Carraro D.M."/>
            <person name="Carrer H."/>
            <person name="Colauto N.B."/>
            <person name="Colombo C."/>
            <person name="Costa F.F."/>
            <person name="Costa M.C.R."/>
            <person name="Costa-Neto C.M."/>
            <person name="Coutinho L.L."/>
            <person name="Cristofani M."/>
            <person name="Dias-Neto E."/>
            <person name="Docena C."/>
            <person name="El-Dorry H."/>
            <person name="Facincani A.P."/>
            <person name="Ferreira A.J.S."/>
            <person name="Ferreira V.C.A."/>
            <person name="Ferro J.A."/>
            <person name="Fraga J.S."/>
            <person name="Franca S.C."/>
            <person name="Franco M.C."/>
            <person name="Frohme M."/>
            <person name="Furlan L.R."/>
            <person name="Garnier M."/>
            <person name="Goldman G.H."/>
            <person name="Goldman M.H.S."/>
            <person name="Gomes S.L."/>
            <person name="Gruber A."/>
            <person name="Ho P.L."/>
            <person name="Hoheisel J.D."/>
            <person name="Junqueira M.L."/>
            <person name="Kemper E.L."/>
            <person name="Kitajima J.P."/>
            <person name="Krieger J.E."/>
            <person name="Kuramae E.E."/>
            <person name="Laigret F."/>
            <person name="Lambais M.R."/>
            <person name="Leite L.C.C."/>
            <person name="Lemos E.G.M."/>
            <person name="Lemos M.V.F."/>
            <person name="Lopes S.A."/>
            <person name="Lopes C.R."/>
            <person name="Machado J.A."/>
            <person name="Machado M.A."/>
            <person name="Madeira A.M.B.N."/>
            <person name="Madeira H.M.F."/>
            <person name="Marino C.L."/>
            <person name="Marques M.V."/>
            <person name="Martins E.A.L."/>
            <person name="Martins E.M.F."/>
            <person name="Matsukuma A.Y."/>
            <person name="Menck C.F.M."/>
            <person name="Miracca E.C."/>
            <person name="Miyaki C.Y."/>
            <person name="Monteiro-Vitorello C.B."/>
            <person name="Moon D.H."/>
            <person name="Nagai M.A."/>
            <person name="Nascimento A.L.T.O."/>
            <person name="Netto L.E.S."/>
            <person name="Nhani A. Jr."/>
            <person name="Nobrega F.G."/>
            <person name="Nunes L.R."/>
            <person name="Oliveira M.A."/>
            <person name="de Oliveira M.C."/>
            <person name="de Oliveira R.C."/>
            <person name="Palmieri D.A."/>
            <person name="Paris A."/>
            <person name="Peixoto B.R."/>
            <person name="Pereira G.A.G."/>
            <person name="Pereira H.A. Jr."/>
            <person name="Pesquero J.B."/>
            <person name="Quaggio R.B."/>
            <person name="Roberto P.G."/>
            <person name="Rodrigues V."/>
            <person name="de Rosa A.J.M."/>
            <person name="de Rosa V.E. Jr."/>
            <person name="de Sa R.G."/>
            <person name="Santelli R.V."/>
            <person name="Sawasaki H.E."/>
            <person name="da Silva A.C.R."/>
            <person name="da Silva A.M."/>
            <person name="da Silva F.R."/>
            <person name="Silva W.A. Jr."/>
            <person name="da Silveira J.F."/>
            <person name="Silvestri M.L.Z."/>
            <person name="Siqueira W.J."/>
            <person name="de Souza A.A."/>
            <person name="de Souza A.P."/>
            <person name="Terenzi M.F."/>
            <person name="Truffi D."/>
            <person name="Tsai S.M."/>
            <person name="Tsuhako M.H."/>
            <person name="Vallada H."/>
            <person name="Van Sluys M.A."/>
            <person name="Verjovski-Almeida S."/>
            <person name="Vettore A.L."/>
            <person name="Zago M.A."/>
            <person name="Zatz M."/>
            <person name="Meidanis J."/>
            <person name="Setubal J.C."/>
        </authorList>
    </citation>
    <scope>NUCLEOTIDE SEQUENCE [LARGE SCALE GENOMIC DNA]</scope>
    <source>
        <strain>9a5c</strain>
    </source>
</reference>
<evidence type="ECO:0000255" key="1">
    <source>
        <dbReference type="HAMAP-Rule" id="MF_01456"/>
    </source>
</evidence>
<keyword id="KW-0997">Cell inner membrane</keyword>
<keyword id="KW-1003">Cell membrane</keyword>
<keyword id="KW-0472">Membrane</keyword>
<keyword id="KW-0520">NAD</keyword>
<keyword id="KW-0874">Quinone</keyword>
<keyword id="KW-1278">Translocase</keyword>
<keyword id="KW-0812">Transmembrane</keyword>
<keyword id="KW-1133">Transmembrane helix</keyword>
<keyword id="KW-0813">Transport</keyword>
<keyword id="KW-0830">Ubiquinone</keyword>
<comment type="function">
    <text evidence="1">NDH-1 shuttles electrons from NADH, via FMN and iron-sulfur (Fe-S) centers, to quinones in the respiratory chain. The immediate electron acceptor for the enzyme in this species is believed to be ubiquinone. Couples the redox reaction to proton translocation (for every two electrons transferred, four hydrogen ions are translocated across the cytoplasmic membrane), and thus conserves the redox energy in a proton gradient.</text>
</comment>
<comment type="catalytic activity">
    <reaction evidence="1">
        <text>a quinone + NADH + 5 H(+)(in) = a quinol + NAD(+) + 4 H(+)(out)</text>
        <dbReference type="Rhea" id="RHEA:57888"/>
        <dbReference type="ChEBI" id="CHEBI:15378"/>
        <dbReference type="ChEBI" id="CHEBI:24646"/>
        <dbReference type="ChEBI" id="CHEBI:57540"/>
        <dbReference type="ChEBI" id="CHEBI:57945"/>
        <dbReference type="ChEBI" id="CHEBI:132124"/>
    </reaction>
</comment>
<comment type="subunit">
    <text evidence="1">NDH-1 is composed of 14 different subunits. Subunits NuoA, H, J, K, L, M, N constitute the membrane sector of the complex.</text>
</comment>
<comment type="subcellular location">
    <subcellularLocation>
        <location evidence="1">Cell inner membrane</location>
        <topology evidence="1">Multi-pass membrane protein</topology>
    </subcellularLocation>
</comment>
<comment type="similarity">
    <text evidence="1">Belongs to the complex I subunit 4L family.</text>
</comment>
<accession>Q9PGI5</accession>
<name>NUOK_XYLFA</name>
<feature type="chain" id="PRO_0000390280" description="NADH-quinone oxidoreductase subunit K">
    <location>
        <begin position="1"/>
        <end position="101"/>
    </location>
</feature>
<feature type="transmembrane region" description="Helical" evidence="1">
    <location>
        <begin position="4"/>
        <end position="24"/>
    </location>
</feature>
<feature type="transmembrane region" description="Helical" evidence="1">
    <location>
        <begin position="30"/>
        <end position="50"/>
    </location>
</feature>
<feature type="transmembrane region" description="Helical" evidence="1">
    <location>
        <begin position="62"/>
        <end position="82"/>
    </location>
</feature>